<feature type="chain" id="PRO_0000453702" description="Sesterterpene synthase btcA">
    <location>
        <begin position="1"/>
        <end position="712"/>
    </location>
</feature>
<feature type="region of interest" description="Terpene cyclase" evidence="2">
    <location>
        <begin position="1"/>
        <end position="332"/>
    </location>
</feature>
<feature type="region of interest" description="Prenyltransferase" evidence="2">
    <location>
        <begin position="333"/>
        <end position="706"/>
    </location>
</feature>
<feature type="region of interest" description="Disordered" evidence="6">
    <location>
        <begin position="334"/>
        <end position="373"/>
    </location>
</feature>
<feature type="short sequence motif" description="DDXXD 1" evidence="2">
    <location>
        <begin position="96"/>
        <end position="100"/>
    </location>
</feature>
<feature type="short sequence motif" description="NSE/DTE" evidence="2">
    <location>
        <begin position="234"/>
        <end position="242"/>
    </location>
</feature>
<feature type="short sequence motif" description="DDXXD 2" evidence="2">
    <location>
        <begin position="453"/>
        <end position="457"/>
    </location>
</feature>
<feature type="compositionally biased region" description="Low complexity" evidence="6">
    <location>
        <begin position="340"/>
        <end position="349"/>
    </location>
</feature>
<feature type="compositionally biased region" description="Low complexity" evidence="6">
    <location>
        <begin position="361"/>
        <end position="373"/>
    </location>
</feature>
<feature type="binding site" evidence="5">
    <location>
        <position position="96"/>
    </location>
    <ligand>
        <name>Mg(2+)</name>
        <dbReference type="ChEBI" id="CHEBI:18420"/>
        <label>1</label>
    </ligand>
</feature>
<feature type="binding site" evidence="5">
    <location>
        <position position="96"/>
    </location>
    <ligand>
        <name>Mg(2+)</name>
        <dbReference type="ChEBI" id="CHEBI:18420"/>
        <label>2</label>
    </ligand>
</feature>
<feature type="binding site" evidence="1">
    <location>
        <position position="96"/>
    </location>
    <ligand>
        <name>substrate</name>
    </ligand>
</feature>
<feature type="binding site" evidence="1">
    <location>
        <position position="234"/>
    </location>
    <ligand>
        <name>substrate</name>
    </ligand>
</feature>
<feature type="binding site" evidence="1">
    <location>
        <begin position="238"/>
        <end position="242"/>
    </location>
    <ligand>
        <name>substrate</name>
    </ligand>
</feature>
<feature type="binding site" evidence="1">
    <location>
        <begin position="328"/>
        <end position="329"/>
    </location>
    <ligand>
        <name>substrate</name>
    </ligand>
</feature>
<feature type="binding site" evidence="4">
    <location>
        <position position="414"/>
    </location>
    <ligand>
        <name>isopentenyl diphosphate</name>
        <dbReference type="ChEBI" id="CHEBI:128769"/>
    </ligand>
</feature>
<feature type="binding site" evidence="4">
    <location>
        <position position="417"/>
    </location>
    <ligand>
        <name>isopentenyl diphosphate</name>
        <dbReference type="ChEBI" id="CHEBI:128769"/>
    </ligand>
</feature>
<feature type="binding site" evidence="4">
    <location>
        <position position="446"/>
    </location>
    <ligand>
        <name>isopentenyl diphosphate</name>
        <dbReference type="ChEBI" id="CHEBI:128769"/>
    </ligand>
</feature>
<feature type="binding site" evidence="4">
    <location>
        <position position="453"/>
    </location>
    <ligand>
        <name>Mg(2+)</name>
        <dbReference type="ChEBI" id="CHEBI:18420"/>
        <label>4</label>
    </ligand>
</feature>
<feature type="binding site" evidence="4">
    <location>
        <position position="457"/>
    </location>
    <ligand>
        <name>Mg(2+)</name>
        <dbReference type="ChEBI" id="CHEBI:18420"/>
        <label>3</label>
    </ligand>
</feature>
<feature type="binding site" evidence="4">
    <location>
        <position position="457"/>
    </location>
    <ligand>
        <name>Mg(2+)</name>
        <dbReference type="ChEBI" id="CHEBI:18420"/>
        <label>4</label>
    </ligand>
</feature>
<feature type="binding site" evidence="4">
    <location>
        <position position="462"/>
    </location>
    <ligand>
        <name>dimethylallyl diphosphate</name>
        <dbReference type="ChEBI" id="CHEBI:57623"/>
    </ligand>
</feature>
<feature type="binding site" evidence="4">
    <location>
        <position position="463"/>
    </location>
    <ligand>
        <name>isopentenyl diphosphate</name>
        <dbReference type="ChEBI" id="CHEBI:128769"/>
    </ligand>
</feature>
<feature type="binding site" evidence="4">
    <location>
        <position position="540"/>
    </location>
    <ligand>
        <name>dimethylallyl diphosphate</name>
        <dbReference type="ChEBI" id="CHEBI:57623"/>
    </ligand>
</feature>
<feature type="binding site" evidence="4">
    <location>
        <position position="541"/>
    </location>
    <ligand>
        <name>dimethylallyl diphosphate</name>
        <dbReference type="ChEBI" id="CHEBI:57623"/>
    </ligand>
</feature>
<feature type="binding site" evidence="4">
    <location>
        <position position="580"/>
    </location>
    <ligand>
        <name>dimethylallyl diphosphate</name>
        <dbReference type="ChEBI" id="CHEBI:57623"/>
    </ligand>
</feature>
<feature type="binding site" evidence="4">
    <location>
        <position position="587"/>
    </location>
    <ligand>
        <name>dimethylallyl diphosphate</name>
        <dbReference type="ChEBI" id="CHEBI:57623"/>
    </ligand>
</feature>
<feature type="binding site" evidence="4">
    <location>
        <position position="597"/>
    </location>
    <ligand>
        <name>dimethylallyl diphosphate</name>
        <dbReference type="ChEBI" id="CHEBI:57623"/>
    </ligand>
</feature>
<feature type="binding site" evidence="4">
    <location>
        <position position="607"/>
    </location>
    <ligand>
        <name>dimethylallyl diphosphate</name>
        <dbReference type="ChEBI" id="CHEBI:57623"/>
    </ligand>
</feature>
<proteinExistence type="evidence at protein level"/>
<sequence>MTTIWEHCVDVDGEVAASTGCFTTLPIRIHRRNDIADDATKQSIHDWGAYVGDGWEQRSGSSWSPVGNWGAFIFPESLPDRLGVITYLANMGNIHDDLCDELPFEEALKEHSNLSQAMEVSNSDTRQCSKASDRSMKMKKYISKCLLEAMEIDRARALRMINSYRSKWLDVMESQNVNDMQTLEEYLAFRNLNGGMEAFWSMVEFGMAIDISESEKTHTRPLFQAAESALVLTNDYWSWDREWRLAQRTQDPRIVNAVHLFMRTEGLSVDQAREKVRERIVDYEREYLRLKEEFYTQNPNLPLYLRRYVEVCGVITAGNHYWCANCPRHHAWRDEESSPSERSFSPSNEGIEDPRLSPGASTTSSMSQKSSPATEITLSDVLGFMAINDNHKPQRSSDMALMAPVQYIRSMPSKGLRSLMVEALDQWLLVDDPELEQIKNIIDLLHNSSLILDDIEDDSPLRRGLPATHTVFGQAQSINSANFMFVQAVQMTQKLNNPASLDTLLDELECLFIGQSWDLYWKFHLQVPTEKEYLEMVDCKTGAMFRLLARLMFHESSVVSGTQVLQLLDEMCRLFGRFFQIRDDFMNLYSTEYSDQKGFCEDLDEGKMSYPLIMLLWQNPGQRDQIMGIFRQQASNTSRGPTSDRSRLPLETKRYVMSLLKGSDIMASTLRKLRDLEAAVDYSISGLEKALGDANPVMRIVLSRLSVRDVSL</sequence>
<name>BTCA_COLOR</name>
<evidence type="ECO:0000250" key="1">
    <source>
        <dbReference type="UniProtKB" id="A2PZA5"/>
    </source>
</evidence>
<evidence type="ECO:0000250" key="2">
    <source>
        <dbReference type="UniProtKB" id="P9WEP0"/>
    </source>
</evidence>
<evidence type="ECO:0000250" key="3">
    <source>
        <dbReference type="UniProtKB" id="P9WEV7"/>
    </source>
</evidence>
<evidence type="ECO:0000250" key="4">
    <source>
        <dbReference type="UniProtKB" id="Q12051"/>
    </source>
</evidence>
<evidence type="ECO:0000250" key="5">
    <source>
        <dbReference type="UniProtKB" id="Q40577"/>
    </source>
</evidence>
<evidence type="ECO:0000256" key="6">
    <source>
        <dbReference type="SAM" id="MobiDB-lite"/>
    </source>
</evidence>
<evidence type="ECO:0000269" key="7">
    <source ref="3"/>
</evidence>
<evidence type="ECO:0000303" key="8">
    <source ref="3"/>
</evidence>
<evidence type="ECO:0000305" key="9"/>
<comment type="function">
    <text evidence="7">Bifunctional terpene synthase; part of the gene cluster that mediates the biosynthesis of betaestacins (Ref.3). The bifunctional terpene synthase btcA converts isopentenyl diphosphate (IPP) and dimethylallyl diphosphate (DMAPP) into the sesterterpene betaestacin I (Ref.3). The C-terminal prenyltransferase (PT) domain of btcA catalyzes formation of GFPP, whereas the N-terminal terpene cyclase (TC) domain catalyzes the cyclization of GFPP into betaestacin I (Ref.3). The cytochrome P450 monooxygenase btcB oxidizes the C25 methyl group of betaestacin I to yield the carboxylic acid betaestacin IV via the alcohol betaestacin III (Ref.3). The cytochrome P450 monooxygenase btcC further catalyzes the multistep oxidation of betaestacin IV to produce several compounds, including betaestacins Va, Vb, Vc and VI (Ref.3).</text>
</comment>
<comment type="catalytic activity">
    <reaction evidence="7">
        <text>isopentenyl diphosphate + (2E,6E)-farnesyl diphosphate = (2E,6E,10E)-geranylgeranyl diphosphate + diphosphate</text>
        <dbReference type="Rhea" id="RHEA:17653"/>
        <dbReference type="ChEBI" id="CHEBI:33019"/>
        <dbReference type="ChEBI" id="CHEBI:58756"/>
        <dbReference type="ChEBI" id="CHEBI:128769"/>
        <dbReference type="ChEBI" id="CHEBI:175763"/>
        <dbReference type="EC" id="2.5.1.29"/>
    </reaction>
    <physiologicalReaction direction="left-to-right" evidence="7">
        <dbReference type="Rhea" id="RHEA:17654"/>
    </physiologicalReaction>
</comment>
<comment type="catalytic activity">
    <reaction evidence="7">
        <text>isopentenyl diphosphate + (2E,6E,10E)-geranylgeranyl diphosphate = (2E,6E,10E,14E)-geranylfarnesyl diphosphate + diphosphate</text>
        <dbReference type="Rhea" id="RHEA:25694"/>
        <dbReference type="ChEBI" id="CHEBI:33019"/>
        <dbReference type="ChEBI" id="CHEBI:57907"/>
        <dbReference type="ChEBI" id="CHEBI:58756"/>
        <dbReference type="ChEBI" id="CHEBI:128769"/>
        <dbReference type="EC" id="2.5.1.81"/>
    </reaction>
    <physiologicalReaction direction="left-to-right" evidence="7">
        <dbReference type="Rhea" id="RHEA:25695"/>
    </physiologicalReaction>
</comment>
<comment type="cofactor">
    <cofactor evidence="3">
        <name>Mg(2+)</name>
        <dbReference type="ChEBI" id="CHEBI:18420"/>
    </cofactor>
</comment>
<comment type="pathway">
    <text evidence="7">Secondary metabolite biosynthesis; terpenoid biosynthesis.</text>
</comment>
<comment type="subunit">
    <text evidence="1">Hexamer.</text>
</comment>
<comment type="domain">
    <text evidence="2">The conserved DDXXD motifs as well as the NSE/DTE motif are important for the catalytic activity, presumably through binding to Mg(2+).</text>
</comment>
<comment type="disruption phenotype">
    <text evidence="7">Does not affect growth and pigmentation on plateculture, nor conidial formation.</text>
</comment>
<comment type="similarity">
    <text evidence="9">In the N-terminal section; belongs to the terpene synthase family.</text>
</comment>
<comment type="similarity">
    <text evidence="9">In the C-terminal section; belongs to the FPP/GGPP synthase family.</text>
</comment>
<reference key="1">
    <citation type="journal article" date="2013" name="New Phytol.">
        <title>Comparative genomic and transcriptomic analyses reveal the hemibiotrophic stage shift of Colletotrichum fungi.</title>
        <authorList>
            <person name="Gan P."/>
            <person name="Ikeda K."/>
            <person name="Irieda H."/>
            <person name="Narusaka M."/>
            <person name="O'Connell R.J."/>
            <person name="Narusaka Y."/>
            <person name="Takano Y."/>
            <person name="Kubo Y."/>
            <person name="Shirasu K."/>
        </authorList>
    </citation>
    <scope>NUCLEOTIDE SEQUENCE [LARGE SCALE GENOMIC DNA]</scope>
    <source>
        <strain>104-T / ATCC 96160 / CBS 514.97 / LARS 414 / MAFF 240422</strain>
    </source>
</reference>
<reference key="2">
    <citation type="journal article" date="2019" name="Mol. Plant Microbe Interact.">
        <title>Genome sequence resources for four phytopathogenic fungi from the Colletotrichum orbiculare species complex.</title>
        <authorList>
            <person name="Gan P."/>
            <person name="Tsushima A."/>
            <person name="Narusaka M."/>
            <person name="Narusaka Y."/>
            <person name="Takano Y."/>
            <person name="Kubo Y."/>
            <person name="Shirasu K."/>
        </authorList>
    </citation>
    <scope>GENOME REANNOTATION</scope>
    <source>
        <strain>104-T / ATCC 96160 / CBS 514.97 / LARS 414 / MAFF 240422</strain>
    </source>
</reference>
<reference key="3">
    <citation type="journal article" date="2018" name="Tetrahedron Lett.">
        <title>Identification of novel sesterterpenes by genome mining of phytopathogenic fungi Phoma and Colletotrichum sp.</title>
        <authorList>
            <person name="Gao L."/>
            <person name="Narita K."/>
            <person name="Ozaki T."/>
            <person name="Kamukara N."/>
            <person name="Gan P."/>
            <person name="Minami A."/>
            <person name="Liu C."/>
            <person name="Lei X."/>
            <person name="Shirasu K."/>
            <person name="Oikawa H."/>
        </authorList>
    </citation>
    <scope>FUNCTION</scope>
    <scope>CATALYTIC ACTIVITY</scope>
    <scope>DISRUPTION PHENOTYPE</scope>
    <scope>PATHWAY</scope>
</reference>
<accession>N4V6D4</accession>
<protein>
    <recommendedName>
        <fullName evidence="8">Sesterterpene synthase btcA</fullName>
        <shortName evidence="8">TS</shortName>
    </recommendedName>
    <alternativeName>
        <fullName evidence="8">Betaestacins biosynthesis cluster protein A</fullName>
    </alternativeName>
    <domain>
        <recommendedName>
            <fullName evidence="8">Terpene cyclase</fullName>
            <ecNumber evidence="7">4.2.3.-</ecNumber>
        </recommendedName>
    </domain>
    <domain>
        <recommendedName>
            <fullName evidence="8">Geranylgeranyl diphosphate synthase</fullName>
            <shortName evidence="8">GGDP synthase</shortName>
            <shortName evidence="8">GGS</shortName>
            <ecNumber evidence="7">2.5.1.29</ecNumber>
        </recommendedName>
    </domain>
    <domain>
        <recommendedName>
            <fullName evidence="8">Geranylfarnesyl diphosphate synthase</fullName>
            <shortName evidence="8">GFDP synthase</shortName>
            <ecNumber evidence="7">2.5.1.81</ecNumber>
        </recommendedName>
    </domain>
</protein>
<organism>
    <name type="scientific">Colletotrichum orbiculare (strain 104-T / ATCC 96160 / CBS 514.97 / LARS 414 / MAFF 240422)</name>
    <name type="common">Cucumber anthracnose fungus</name>
    <name type="synonym">Colletotrichum lagenarium</name>
    <dbReference type="NCBI Taxonomy" id="1213857"/>
    <lineage>
        <taxon>Eukaryota</taxon>
        <taxon>Fungi</taxon>
        <taxon>Dikarya</taxon>
        <taxon>Ascomycota</taxon>
        <taxon>Pezizomycotina</taxon>
        <taxon>Sordariomycetes</taxon>
        <taxon>Hypocreomycetidae</taxon>
        <taxon>Glomerellales</taxon>
        <taxon>Glomerellaceae</taxon>
        <taxon>Colletotrichum</taxon>
        <taxon>Colletotrichum orbiculare species complex</taxon>
    </lineage>
</organism>
<gene>
    <name evidence="8" type="primary">btcA</name>
    <name type="ORF">Cob_11435</name>
    <name type="ORF">Cob_v004818</name>
</gene>
<dbReference type="EC" id="4.2.3.-" evidence="7"/>
<dbReference type="EC" id="2.5.1.29" evidence="7"/>
<dbReference type="EC" id="2.5.1.81" evidence="7"/>
<dbReference type="EMBL" id="KB726025">
    <property type="protein sequence ID" value="ENH79267.1"/>
    <property type="molecule type" value="Genomic_DNA"/>
</dbReference>
<dbReference type="EMBL" id="AMCV02000011">
    <property type="protein sequence ID" value="TDZ21940.1"/>
    <property type="molecule type" value="Genomic_DNA"/>
</dbReference>
<dbReference type="SMR" id="N4V6D4"/>
<dbReference type="STRING" id="1213857.N4V6D4"/>
<dbReference type="EnsemblFungi" id="ENH79267">
    <property type="protein sequence ID" value="ENH79267"/>
    <property type="gene ID" value="Cob_11435"/>
</dbReference>
<dbReference type="eggNOG" id="KOG0777">
    <property type="taxonomic scope" value="Eukaryota"/>
</dbReference>
<dbReference type="HOGENOM" id="CLU_014015_10_0_1"/>
<dbReference type="OrthoDB" id="6921389at2759"/>
<dbReference type="UniPathway" id="UPA00213"/>
<dbReference type="Proteomes" id="UP000014480">
    <property type="component" value="Unassembled WGS sequence"/>
</dbReference>
<dbReference type="GO" id="GO:0016829">
    <property type="term" value="F:lyase activity"/>
    <property type="evidence" value="ECO:0007669"/>
    <property type="project" value="UniProtKB-KW"/>
</dbReference>
<dbReference type="GO" id="GO:0046872">
    <property type="term" value="F:metal ion binding"/>
    <property type="evidence" value="ECO:0007669"/>
    <property type="project" value="UniProtKB-KW"/>
</dbReference>
<dbReference type="GO" id="GO:0004659">
    <property type="term" value="F:prenyltransferase activity"/>
    <property type="evidence" value="ECO:0007669"/>
    <property type="project" value="InterPro"/>
</dbReference>
<dbReference type="GO" id="GO:0046165">
    <property type="term" value="P:alcohol biosynthetic process"/>
    <property type="evidence" value="ECO:0007669"/>
    <property type="project" value="UniProtKB-ARBA"/>
</dbReference>
<dbReference type="GO" id="GO:0043386">
    <property type="term" value="P:mycotoxin biosynthetic process"/>
    <property type="evidence" value="ECO:0007669"/>
    <property type="project" value="UniProtKB-ARBA"/>
</dbReference>
<dbReference type="GO" id="GO:0016114">
    <property type="term" value="P:terpenoid biosynthetic process"/>
    <property type="evidence" value="ECO:0007669"/>
    <property type="project" value="UniProtKB-UniPathway"/>
</dbReference>
<dbReference type="CDD" id="cd00685">
    <property type="entry name" value="Trans_IPPS_HT"/>
    <property type="match status" value="1"/>
</dbReference>
<dbReference type="Gene3D" id="1.10.600.10">
    <property type="entry name" value="Farnesyl Diphosphate Synthase"/>
    <property type="match status" value="2"/>
</dbReference>
<dbReference type="InterPro" id="IPR008949">
    <property type="entry name" value="Isoprenoid_synthase_dom_sf"/>
</dbReference>
<dbReference type="InterPro" id="IPR000092">
    <property type="entry name" value="Polyprenyl_synt"/>
</dbReference>
<dbReference type="InterPro" id="IPR033749">
    <property type="entry name" value="Polyprenyl_synt_CS"/>
</dbReference>
<dbReference type="PANTHER" id="PTHR12001">
    <property type="entry name" value="GERANYLGERANYL PYROPHOSPHATE SYNTHASE"/>
    <property type="match status" value="1"/>
</dbReference>
<dbReference type="PANTHER" id="PTHR12001:SF72">
    <property type="entry name" value="THIJ_PFPI FAMILY PROTEIN (AFU_ORTHOLOGUE AFUA_3G01210)-RELATED"/>
    <property type="match status" value="1"/>
</dbReference>
<dbReference type="Pfam" id="PF00348">
    <property type="entry name" value="polyprenyl_synt"/>
    <property type="match status" value="1"/>
</dbReference>
<dbReference type="Pfam" id="PF19086">
    <property type="entry name" value="Terpene_syn_C_2"/>
    <property type="match status" value="1"/>
</dbReference>
<dbReference type="SFLD" id="SFLDS00005">
    <property type="entry name" value="Isoprenoid_Synthase_Type_I"/>
    <property type="match status" value="1"/>
</dbReference>
<dbReference type="SUPFAM" id="SSF48576">
    <property type="entry name" value="Terpenoid synthases"/>
    <property type="match status" value="2"/>
</dbReference>
<dbReference type="PROSITE" id="PS00723">
    <property type="entry name" value="POLYPRENYL_SYNTHASE_1"/>
    <property type="match status" value="1"/>
</dbReference>
<dbReference type="PROSITE" id="PS00444">
    <property type="entry name" value="POLYPRENYL_SYNTHASE_2"/>
    <property type="match status" value="1"/>
</dbReference>
<keyword id="KW-0414">Isoprene biosynthesis</keyword>
<keyword id="KW-0456">Lyase</keyword>
<keyword id="KW-0460">Magnesium</keyword>
<keyword id="KW-0479">Metal-binding</keyword>
<keyword id="KW-0511">Multifunctional enzyme</keyword>
<keyword id="KW-1185">Reference proteome</keyword>
<keyword id="KW-0677">Repeat</keyword>
<keyword id="KW-0808">Transferase</keyword>